<gene>
    <name evidence="1" type="primary">rplW</name>
    <name type="ordered locus">NE0403</name>
</gene>
<keyword id="KW-1185">Reference proteome</keyword>
<keyword id="KW-0687">Ribonucleoprotein</keyword>
<keyword id="KW-0689">Ribosomal protein</keyword>
<keyword id="KW-0694">RNA-binding</keyword>
<keyword id="KW-0699">rRNA-binding</keyword>
<protein>
    <recommendedName>
        <fullName evidence="1">Large ribosomal subunit protein uL23</fullName>
    </recommendedName>
    <alternativeName>
        <fullName evidence="2">50S ribosomal protein L23</fullName>
    </alternativeName>
</protein>
<sequence length="111" mass="12911">MRNITISSERALEVIKAPQISEKSTFIAEKTKQIIFYVSRDANKTEIKSAIEQIWRSQNIQVKSVQVVNVKGKKKRFGRYLGQKSDWKKAFVSLKGDREIDFTDVKLFEDK</sequence>
<reference key="1">
    <citation type="journal article" date="2003" name="J. Bacteriol.">
        <title>Complete genome sequence of the ammonia-oxidizing bacterium and obligate chemolithoautotroph Nitrosomonas europaea.</title>
        <authorList>
            <person name="Chain P."/>
            <person name="Lamerdin J.E."/>
            <person name="Larimer F.W."/>
            <person name="Regala W."/>
            <person name="Lao V."/>
            <person name="Land M.L."/>
            <person name="Hauser L."/>
            <person name="Hooper A.B."/>
            <person name="Klotz M.G."/>
            <person name="Norton J."/>
            <person name="Sayavedra-Soto L.A."/>
            <person name="Arciero D.M."/>
            <person name="Hommes N.G."/>
            <person name="Whittaker M.M."/>
            <person name="Arp D.J."/>
        </authorList>
    </citation>
    <scope>NUCLEOTIDE SEQUENCE [LARGE SCALE GENOMIC DNA]</scope>
    <source>
        <strain>ATCC 19718 / CIP 103999 / KCTC 2705 / NBRC 14298</strain>
    </source>
</reference>
<proteinExistence type="inferred from homology"/>
<feature type="chain" id="PRO_0000272787" description="Large ribosomal subunit protein uL23">
    <location>
        <begin position="1"/>
        <end position="111"/>
    </location>
</feature>
<evidence type="ECO:0000255" key="1">
    <source>
        <dbReference type="HAMAP-Rule" id="MF_01369"/>
    </source>
</evidence>
<evidence type="ECO:0000305" key="2"/>
<name>RL23_NITEU</name>
<dbReference type="EMBL" id="AL954747">
    <property type="protein sequence ID" value="CAD84314.1"/>
    <property type="molecule type" value="Genomic_DNA"/>
</dbReference>
<dbReference type="RefSeq" id="WP_011111038.1">
    <property type="nucleotide sequence ID" value="NC_004757.1"/>
</dbReference>
<dbReference type="SMR" id="Q82X86"/>
<dbReference type="STRING" id="228410.NE0403"/>
<dbReference type="GeneID" id="87103613"/>
<dbReference type="KEGG" id="neu:NE0403"/>
<dbReference type="eggNOG" id="COG0089">
    <property type="taxonomic scope" value="Bacteria"/>
</dbReference>
<dbReference type="HOGENOM" id="CLU_037562_3_1_4"/>
<dbReference type="OrthoDB" id="9793353at2"/>
<dbReference type="PhylomeDB" id="Q82X86"/>
<dbReference type="Proteomes" id="UP000001416">
    <property type="component" value="Chromosome"/>
</dbReference>
<dbReference type="GO" id="GO:1990904">
    <property type="term" value="C:ribonucleoprotein complex"/>
    <property type="evidence" value="ECO:0007669"/>
    <property type="project" value="UniProtKB-KW"/>
</dbReference>
<dbReference type="GO" id="GO:0005840">
    <property type="term" value="C:ribosome"/>
    <property type="evidence" value="ECO:0007669"/>
    <property type="project" value="UniProtKB-KW"/>
</dbReference>
<dbReference type="GO" id="GO:0019843">
    <property type="term" value="F:rRNA binding"/>
    <property type="evidence" value="ECO:0007669"/>
    <property type="project" value="UniProtKB-UniRule"/>
</dbReference>
<dbReference type="GO" id="GO:0003735">
    <property type="term" value="F:structural constituent of ribosome"/>
    <property type="evidence" value="ECO:0007669"/>
    <property type="project" value="InterPro"/>
</dbReference>
<dbReference type="GO" id="GO:0006412">
    <property type="term" value="P:translation"/>
    <property type="evidence" value="ECO:0007669"/>
    <property type="project" value="UniProtKB-UniRule"/>
</dbReference>
<dbReference type="FunFam" id="3.30.70.330:FF:000001">
    <property type="entry name" value="50S ribosomal protein L23"/>
    <property type="match status" value="1"/>
</dbReference>
<dbReference type="Gene3D" id="3.30.70.330">
    <property type="match status" value="1"/>
</dbReference>
<dbReference type="HAMAP" id="MF_01369_B">
    <property type="entry name" value="Ribosomal_uL23_B"/>
    <property type="match status" value="1"/>
</dbReference>
<dbReference type="InterPro" id="IPR012677">
    <property type="entry name" value="Nucleotide-bd_a/b_plait_sf"/>
</dbReference>
<dbReference type="InterPro" id="IPR013025">
    <property type="entry name" value="Ribosomal_uL23-like"/>
</dbReference>
<dbReference type="InterPro" id="IPR012678">
    <property type="entry name" value="Ribosomal_uL23/eL15/eS24_sf"/>
</dbReference>
<dbReference type="NCBIfam" id="NF004359">
    <property type="entry name" value="PRK05738.1-3"/>
    <property type="match status" value="1"/>
</dbReference>
<dbReference type="NCBIfam" id="NF004363">
    <property type="entry name" value="PRK05738.2-4"/>
    <property type="match status" value="1"/>
</dbReference>
<dbReference type="Pfam" id="PF00276">
    <property type="entry name" value="Ribosomal_L23"/>
    <property type="match status" value="1"/>
</dbReference>
<dbReference type="SUPFAM" id="SSF54189">
    <property type="entry name" value="Ribosomal proteins S24e, L23 and L15e"/>
    <property type="match status" value="1"/>
</dbReference>
<organism>
    <name type="scientific">Nitrosomonas europaea (strain ATCC 19718 / CIP 103999 / KCTC 2705 / NBRC 14298)</name>
    <dbReference type="NCBI Taxonomy" id="228410"/>
    <lineage>
        <taxon>Bacteria</taxon>
        <taxon>Pseudomonadati</taxon>
        <taxon>Pseudomonadota</taxon>
        <taxon>Betaproteobacteria</taxon>
        <taxon>Nitrosomonadales</taxon>
        <taxon>Nitrosomonadaceae</taxon>
        <taxon>Nitrosomonas</taxon>
    </lineage>
</organism>
<accession>Q82X86</accession>
<comment type="function">
    <text evidence="1">One of the early assembly proteins it binds 23S rRNA. One of the proteins that surrounds the polypeptide exit tunnel on the outside of the ribosome. Forms the main docking site for trigger factor binding to the ribosome.</text>
</comment>
<comment type="subunit">
    <text evidence="1">Part of the 50S ribosomal subunit. Contacts protein L29, and trigger factor when it is bound to the ribosome.</text>
</comment>
<comment type="similarity">
    <text evidence="1">Belongs to the universal ribosomal protein uL23 family.</text>
</comment>